<gene>
    <name type="primary">Zc3hav1</name>
    <name type="synonym">Zap</name>
</gene>
<organism>
    <name type="scientific">Rattus norvegicus</name>
    <name type="common">Rat</name>
    <dbReference type="NCBI Taxonomy" id="10116"/>
    <lineage>
        <taxon>Eukaryota</taxon>
        <taxon>Metazoa</taxon>
        <taxon>Chordata</taxon>
        <taxon>Craniata</taxon>
        <taxon>Vertebrata</taxon>
        <taxon>Euteleostomi</taxon>
        <taxon>Mammalia</taxon>
        <taxon>Eutheria</taxon>
        <taxon>Euarchontoglires</taxon>
        <taxon>Glires</taxon>
        <taxon>Rodentia</taxon>
        <taxon>Myomorpha</taxon>
        <taxon>Muroidea</taxon>
        <taxon>Muridae</taxon>
        <taxon>Murinae</taxon>
        <taxon>Rattus</taxon>
    </lineage>
</organism>
<comment type="function">
    <text evidence="8 9 11 12 13 14 18">Antiviral protein which inhibits the replication of viruses by recruiting the cellular RNA degradation machineries to degrade the viral mRNAs. Binds to a ZAP-responsive element (ZRE) present in the target viral mRNA, recruits cellular poly(A)-specific ribonuclease PARN to remove the poly(A) tail, and the 3'-5' exoribonuclease complex exosome to degrade the RNA body from the 3'-end. It also recruits the decapping complex DCP1-DCP2 through RNA helicase p72 (DDX17) to remove the cap structure of the viral mRNA to initiate its degradation from the 5'-end. Its target viruses belong to families which include retroviridae: human immunodeficiency virus type 1 (HIV-1) and moloney and murine leukemia virus (MoMLV), filoviridae: ebola virus (EBOV) and marburg virus (MARV), togaviridae: sindbis virus (SINV) and Ross river virus (RRV). Specifically targets the multiply spliced but not unspliced or singly spliced HIV-1 mRNAs for degradation.</text>
</comment>
<comment type="subunit">
    <text evidence="1 12 15 16 17 18 19">Homodimer or homooligomer. Homooligomerization is essential for its antiviral activity. Interacts with EXOSC5. Interacts with EXOSC3, EXOSC7, DCP2 and DCP1A (By similarity). Interacts with PARN in an RNA-independent manner (By similarity). Interacts with XRN1 in an RNA-dependent manner (By similarity). Interacts (via N-terminal domain) with DHX30 (via N-terminus) in an RNA-independent manner. Interacts (via N-terminal domain) with DDX17 in an RNA-independent manner.</text>
</comment>
<comment type="interaction">
    <interactant intactId="EBI-8860250">
        <id>Q8K3Y6</id>
    </interactant>
    <interactant intactId="EBI-8860250">
        <id>Q8K3Y6</id>
        <label>Zc3hav1</label>
    </interactant>
    <organismsDiffer>false</organismsDiffer>
    <experiments>3</experiments>
</comment>
<comment type="interaction">
    <interactant intactId="EBI-8860250">
        <id>Q8K3Y6</id>
    </interactant>
    <interactant intactId="EBI-746012">
        <id>Q92841</id>
        <label>DDX17</label>
    </interactant>
    <organismsDiffer>true</organismsDiffer>
    <experiments>6</experiments>
</comment>
<comment type="interaction">
    <interactant intactId="EBI-8860250">
        <id>Q8K3Y6</id>
    </interactant>
    <interactant intactId="EBI-371866">
        <id>Q9NQT5</id>
        <label>EXOSC3</label>
    </interactant>
    <organismsDiffer>true</organismsDiffer>
    <experiments>3</experiments>
</comment>
<comment type="interaction">
    <interactant intactId="EBI-8860250">
        <id>Q8K3Y6</id>
    </interactant>
    <interactant intactId="EBI-371876">
        <id>Q9NQT4</id>
        <label>EXOSC5</label>
    </interactant>
    <organismsDiffer>true</organismsDiffer>
    <experiments>6</experiments>
</comment>
<comment type="subcellular location">
    <subcellularLocation>
        <location evidence="10 13">Cytoplasm</location>
    </subcellularLocation>
    <subcellularLocation>
        <location evidence="10">Nucleus</location>
    </subcellularLocation>
    <text evidence="10">Localizes in the cytoplasm at steady state, but shuttles between nucleus and cytoplasm in a XPO1-dependent manner.</text>
</comment>
<comment type="tissue specificity">
    <text evidence="8">Expressed in the kidney and liver.</text>
</comment>
<comment type="induction">
    <text evidence="13">By type I interferon (IFN) and viruses.</text>
</comment>
<comment type="domain">
    <text evidence="3">The N-terminal domain is sufficient to bind to viral RNAs and promote their degradation. The second and fourth zinc fingers are involved in binding to specific viral RNAs. Contains a divergent PARP homology ADP-ribosyltransferase domain which lacks the structural requirements for NAD[+] binding. It is therefore inactive.</text>
</comment>
<comment type="PTM">
    <text evidence="20">Phosphorylation at Ser-274 is essential for sequential phosphorylation of Ser-270, Ser-266, Ser-262 and Ser-257 by GSK3-beta. Phosphorylation by GSK3-beta enhances its antiviral activity.</text>
</comment>
<comment type="similarity">
    <text evidence="21">Belongs to the ARTD/PARP family.</text>
</comment>
<feature type="initiator methionine" description="Removed" evidence="3">
    <location>
        <position position="1"/>
    </location>
</feature>
<feature type="chain" id="PRO_0000211344" description="Zinc finger CCCH-type antiviral protein 1">
    <location>
        <begin position="2"/>
        <end position="776"/>
    </location>
</feature>
<feature type="domain" description="WWE" evidence="5">
    <location>
        <begin position="671"/>
        <end position="758"/>
    </location>
</feature>
<feature type="zinc finger region" description="C3H1-type 1" evidence="6">
    <location>
        <begin position="73"/>
        <end position="86"/>
    </location>
</feature>
<feature type="zinc finger region" description="C3H1-type 2" evidence="6">
    <location>
        <begin position="88"/>
        <end position="110"/>
    </location>
</feature>
<feature type="zinc finger region" description="C3H1-type 3" evidence="6">
    <location>
        <begin position="150"/>
        <end position="172"/>
    </location>
</feature>
<feature type="zinc finger region" description="C3H1-type 4" evidence="6">
    <location>
        <begin position="169"/>
        <end position="193"/>
    </location>
</feature>
<feature type="region of interest" description="N-terminal domain">
    <location>
        <begin position="2"/>
        <end position="254"/>
    </location>
</feature>
<feature type="region of interest" description="Disordered" evidence="7">
    <location>
        <begin position="221"/>
        <end position="249"/>
    </location>
</feature>
<feature type="region of interest" description="Binding to EXOSC5">
    <location>
        <begin position="224"/>
        <end position="254"/>
    </location>
</feature>
<feature type="region of interest" description="Disordered" evidence="7">
    <location>
        <begin position="308"/>
        <end position="355"/>
    </location>
</feature>
<feature type="region of interest" description="Disordered" evidence="7">
    <location>
        <begin position="457"/>
        <end position="483"/>
    </location>
</feature>
<feature type="region of interest" description="Disordered" evidence="7">
    <location>
        <begin position="512"/>
        <end position="562"/>
    </location>
</feature>
<feature type="short sequence motif" description="Nuclear localization signal" evidence="10">
    <location>
        <begin position="69"/>
        <end position="76"/>
    </location>
</feature>
<feature type="short sequence motif" description="Nuclear export signal">
    <location>
        <begin position="284"/>
        <end position="291"/>
    </location>
</feature>
<feature type="short sequence motif" description="Nuclear localization signal" evidence="4">
    <location>
        <begin position="405"/>
        <end position="406"/>
    </location>
</feature>
<feature type="compositionally biased region" description="Polar residues" evidence="7">
    <location>
        <begin position="318"/>
        <end position="327"/>
    </location>
</feature>
<feature type="compositionally biased region" description="Low complexity" evidence="7">
    <location>
        <begin position="344"/>
        <end position="353"/>
    </location>
</feature>
<feature type="compositionally biased region" description="Polar residues" evidence="7">
    <location>
        <begin position="459"/>
        <end position="483"/>
    </location>
</feature>
<feature type="compositionally biased region" description="Low complexity" evidence="7">
    <location>
        <begin position="523"/>
        <end position="546"/>
    </location>
</feature>
<feature type="modified residue" description="N-acetylalanine" evidence="3">
    <location>
        <position position="2"/>
    </location>
</feature>
<feature type="modified residue" description="Phosphoserine; by GSK3-beta" evidence="20">
    <location>
        <position position="257"/>
    </location>
</feature>
<feature type="modified residue" description="Phosphoserine; by GSK3-beta" evidence="20">
    <location>
        <position position="262"/>
    </location>
</feature>
<feature type="modified residue" description="Phosphoserine; by GSK3-beta" evidence="20 22">
    <location>
        <position position="266"/>
    </location>
</feature>
<feature type="modified residue" description="Phosphoserine; by GSK3-beta" evidence="20 22">
    <location>
        <position position="270"/>
    </location>
</feature>
<feature type="modified residue" description="Phosphoserine" evidence="20 22">
    <location>
        <position position="274"/>
    </location>
</feature>
<feature type="modified residue" description="Phosphothreonine" evidence="2">
    <location>
        <position position="278"/>
    </location>
</feature>
<feature type="modified residue" description="Phosphoserine" evidence="3">
    <location>
        <position position="283"/>
    </location>
</feature>
<feature type="modified residue" description="Phosphoserine" evidence="22">
    <location>
        <position position="325"/>
    </location>
</feature>
<feature type="modified residue" description="Phosphoserine" evidence="3">
    <location>
        <position position="351"/>
    </location>
</feature>
<feature type="modified residue" description="Phosphoserine" evidence="3">
    <location>
        <position position="398"/>
    </location>
</feature>
<feature type="modified residue" description="Phosphotyrosine" evidence="2">
    <location>
        <position position="501"/>
    </location>
</feature>
<feature type="modified residue" description="Phosphoserine" evidence="2">
    <location>
        <position position="544"/>
    </location>
</feature>
<feature type="modified residue" description="Phosphoserine" evidence="3">
    <location>
        <position position="667"/>
    </location>
</feature>
<feature type="mutagenesis site" description="Results in a non-functional protein with a dominant negative phenotype." evidence="16">
    <original>C</original>
    <variation>R</variation>
    <location>
        <position position="88"/>
    </location>
</feature>
<feature type="helix" evidence="23">
    <location>
        <begin position="9"/>
        <end position="16"/>
    </location>
</feature>
<feature type="turn" evidence="23">
    <location>
        <begin position="17"/>
        <end position="19"/>
    </location>
</feature>
<feature type="strand" evidence="23">
    <location>
        <begin position="20"/>
        <end position="22"/>
    </location>
</feature>
<feature type="helix" evidence="23">
    <location>
        <begin position="23"/>
        <end position="30"/>
    </location>
</feature>
<feature type="helix" evidence="23">
    <location>
        <begin position="34"/>
        <end position="44"/>
    </location>
</feature>
<feature type="turn" evidence="23">
    <location>
        <begin position="46"/>
        <end position="48"/>
    </location>
</feature>
<feature type="strand" evidence="23">
    <location>
        <begin position="49"/>
        <end position="53"/>
    </location>
</feature>
<feature type="strand" evidence="23">
    <location>
        <begin position="62"/>
        <end position="66"/>
    </location>
</feature>
<feature type="helix" evidence="23">
    <location>
        <begin position="89"/>
        <end position="92"/>
    </location>
</feature>
<feature type="helix" evidence="23">
    <location>
        <begin position="97"/>
        <end position="99"/>
    </location>
</feature>
<feature type="helix" evidence="23">
    <location>
        <begin position="115"/>
        <end position="123"/>
    </location>
</feature>
<feature type="helix" evidence="23">
    <location>
        <begin position="131"/>
        <end position="139"/>
    </location>
</feature>
<feature type="helix" evidence="23">
    <location>
        <begin position="143"/>
        <end position="145"/>
    </location>
</feature>
<feature type="strand" evidence="23">
    <location>
        <begin position="156"/>
        <end position="158"/>
    </location>
</feature>
<feature type="strand" evidence="23">
    <location>
        <begin position="163"/>
        <end position="166"/>
    </location>
</feature>
<feature type="helix" evidence="23">
    <location>
        <begin position="175"/>
        <end position="178"/>
    </location>
</feature>
<feature type="helix" evidence="23">
    <location>
        <begin position="196"/>
        <end position="205"/>
    </location>
</feature>
<feature type="helix" evidence="23">
    <location>
        <begin position="209"/>
        <end position="223"/>
    </location>
</feature>
<proteinExistence type="evidence at protein level"/>
<keyword id="KW-0002">3D-structure</keyword>
<keyword id="KW-0007">Acetylation</keyword>
<keyword id="KW-0051">Antiviral defense</keyword>
<keyword id="KW-0963">Cytoplasm</keyword>
<keyword id="KW-0903">Direct protein sequencing</keyword>
<keyword id="KW-0391">Immunity</keyword>
<keyword id="KW-0399">Innate immunity</keyword>
<keyword id="KW-0479">Metal-binding</keyword>
<keyword id="KW-0539">Nucleus</keyword>
<keyword id="KW-0597">Phosphoprotein</keyword>
<keyword id="KW-1185">Reference proteome</keyword>
<keyword id="KW-0677">Repeat</keyword>
<keyword id="KW-0694">RNA-binding</keyword>
<keyword id="KW-0862">Zinc</keyword>
<keyword id="KW-0863">Zinc-finger</keyword>
<evidence type="ECO:0000250" key="1"/>
<evidence type="ECO:0000250" key="2">
    <source>
        <dbReference type="UniProtKB" id="Q3UPF5"/>
    </source>
</evidence>
<evidence type="ECO:0000250" key="3">
    <source>
        <dbReference type="UniProtKB" id="Q7Z2W4"/>
    </source>
</evidence>
<evidence type="ECO:0000255" key="4"/>
<evidence type="ECO:0000255" key="5">
    <source>
        <dbReference type="PROSITE-ProRule" id="PRU00248"/>
    </source>
</evidence>
<evidence type="ECO:0000255" key="6">
    <source>
        <dbReference type="PROSITE-ProRule" id="PRU00723"/>
    </source>
</evidence>
<evidence type="ECO:0000256" key="7">
    <source>
        <dbReference type="SAM" id="MobiDB-lite"/>
    </source>
</evidence>
<evidence type="ECO:0000269" key="8">
    <source>
    </source>
</evidence>
<evidence type="ECO:0000269" key="9">
    <source>
    </source>
</evidence>
<evidence type="ECO:0000269" key="10">
    <source>
    </source>
</evidence>
<evidence type="ECO:0000269" key="11">
    <source>
    </source>
</evidence>
<evidence type="ECO:0000269" key="12">
    <source>
    </source>
</evidence>
<evidence type="ECO:0000269" key="13">
    <source>
    </source>
</evidence>
<evidence type="ECO:0000269" key="14">
    <source>
    </source>
</evidence>
<evidence type="ECO:0000269" key="15">
    <source>
    </source>
</evidence>
<evidence type="ECO:0000269" key="16">
    <source>
    </source>
</evidence>
<evidence type="ECO:0000269" key="17">
    <source>
    </source>
</evidence>
<evidence type="ECO:0000269" key="18">
    <source>
    </source>
</evidence>
<evidence type="ECO:0000269" key="19">
    <source>
    </source>
</evidence>
<evidence type="ECO:0000269" key="20">
    <source>
    </source>
</evidence>
<evidence type="ECO:0000305" key="21"/>
<evidence type="ECO:0007744" key="22">
    <source>
    </source>
</evidence>
<evidence type="ECO:0007829" key="23">
    <source>
        <dbReference type="PDB" id="3U9G"/>
    </source>
</evidence>
<accession>Q8K3Y6</accession>
<reference key="1">
    <citation type="journal article" date="2002" name="Science">
        <title>Inhibition of retroviral RNA production by ZAP, a CCCH-type zinc finger protein.</title>
        <authorList>
            <person name="Gao G."/>
            <person name="Guo X."/>
            <person name="Goff S.P."/>
        </authorList>
    </citation>
    <scope>NUCLEOTIDE SEQUENCE [MRNA]</scope>
    <scope>FUNCTION</scope>
    <scope>TISSUE SPECIFICITY</scope>
</reference>
<reference key="2">
    <citation type="submission" date="2007-09" db="UniProtKB">
        <authorList>
            <person name="Lubec G."/>
            <person name="Kang S.U."/>
            <person name="Lubec S."/>
        </authorList>
    </citation>
    <scope>PROTEIN SEQUENCE OF 227-238; 341-349; 359-371 AND 548-562</scope>
    <scope>IDENTIFICATION BY MASS SPECTROMETRY</scope>
    <source>
        <strain>Sprague-Dawley</strain>
        <tissue>Brain</tissue>
    </source>
</reference>
<reference key="3">
    <citation type="journal article" date="2003" name="J. Virol.">
        <title>Expression of the zinc-finger antiviral protein inhibits alphavirus replication.</title>
        <authorList>
            <person name="Bick M.J."/>
            <person name="Carroll J.W."/>
            <person name="Gao G."/>
            <person name="Goff S.P."/>
            <person name="Rice C.M."/>
            <person name="McDonald M.R."/>
        </authorList>
    </citation>
    <scope>FUNCTION</scope>
</reference>
<reference key="4">
    <citation type="journal article" date="2004" name="Biochem. Biophys. Res. Commun.">
        <title>ZAP is a CRM1-dependent nucleocytoplasmic shuttling protein.</title>
        <authorList>
            <person name="Liu L."/>
            <person name="Chen G."/>
            <person name="Ji X."/>
            <person name="Gao G."/>
        </authorList>
    </citation>
    <scope>SUBCELLULAR LOCATION</scope>
    <scope>NUCLEAR LOCALIZATION SIGNAL</scope>
    <scope>NUCLEAR EXPORT SIGNAL</scope>
</reference>
<reference key="5">
    <citation type="journal article" date="2004" name="J. Virol.">
        <title>The zinc finger antiviral protein directly binds to specific viral mRNAs through the CCCH zinc finger motifs.</title>
        <authorList>
            <person name="Guo X."/>
            <person name="Carroll J.-W."/>
            <person name="McDonald M.R."/>
            <person name="Goff S.P."/>
            <person name="Gao G."/>
        </authorList>
    </citation>
    <scope>RNA-BINDING</scope>
</reference>
<reference key="6">
    <citation type="journal article" date="2007" name="J. Virol.">
        <title>Inhibition of filovirus replication by the zinc finger antiviral protein.</title>
        <authorList>
            <person name="Mueller S."/>
            <person name="Moeller P."/>
            <person name="Bick M.J."/>
            <person name="Wurr S."/>
            <person name="Becker S."/>
            <person name="Guenther S."/>
            <person name="Kuemmerer B.M."/>
        </authorList>
    </citation>
    <scope>FUNCTION</scope>
</reference>
<reference key="7">
    <citation type="journal article" date="2007" name="Proc. Natl. Acad. Sci. U.S.A.">
        <title>The zinc-finger antiviral protein recruits the RNA processing exosome to degrade the target mRNA.</title>
        <authorList>
            <person name="Guo X."/>
            <person name="Ma J."/>
            <person name="Sun J."/>
            <person name="Gao G."/>
        </authorList>
    </citation>
    <scope>FUNCTION</scope>
    <scope>INTERACTION WITH EXOSC5</scope>
</reference>
<reference key="8">
    <citation type="journal article" date="2007" name="J. Virol.">
        <title>The zinc finger antiviral protein acts synergistically with an interferon-induced factor for maximal activity against alphaviruses.</title>
        <authorList>
            <person name="MacDonald M.R."/>
            <person name="Machlin E.S."/>
            <person name="Albin O.R."/>
            <person name="Levy D.E."/>
        </authorList>
    </citation>
    <scope>FUNCTION</scope>
    <scope>INDUCTION</scope>
    <scope>SUBCELLULAR LOCATION</scope>
</reference>
<reference key="9">
    <citation type="journal article" date="2008" name="PLoS Genet.">
        <title>Positive selection and increased antiviral activity associated with the PARP-containing isoform of human zinc-finger antiviral protein.</title>
        <authorList>
            <person name="Kerns J.A."/>
            <person name="Emerman M."/>
            <person name="Malik H.S."/>
        </authorList>
    </citation>
    <scope>FUNCTION</scope>
</reference>
<reference key="10">
    <citation type="journal article" date="2008" name="Proc. Natl. Acad. Sci. U.S.A.">
        <title>p72 DEAD box RNA helicase is required for optimal function of the zinc-finger antiviral protein.</title>
        <authorList>
            <person name="Chen G."/>
            <person name="Guo X."/>
            <person name="Lv F."/>
            <person name="Xu Y."/>
            <person name="Gao G."/>
        </authorList>
    </citation>
    <scope>INTERACTION WITH DDX17</scope>
</reference>
<reference key="11">
    <citation type="journal article" date="2010" name="J. Virol.">
        <title>Identification of a dominant negative inhibitor of human zinc finger antiviral protein reveals a functional endogenous pool and critical homotypic interactions.</title>
        <authorList>
            <person name="Law L.M."/>
            <person name="Albin O.R."/>
            <person name="Carroll J.W."/>
            <person name="Jones C.T."/>
            <person name="Rice C.M."/>
            <person name="Macdonald M.R."/>
        </authorList>
    </citation>
    <scope>SUBUNIT</scope>
    <scope>MUTAGENESIS OF CYS-88</scope>
</reference>
<reference key="12">
    <citation type="journal article" date="2010" name="Protein Cell">
        <title>DEXH-Box protein DHX30 is required for optimal function of the zinc-finger antiviral protein.</title>
        <authorList>
            <person name="Ye P."/>
            <person name="Liu S."/>
            <person name="Zhu Y."/>
            <person name="Chen G."/>
            <person name="Gao G."/>
        </authorList>
    </citation>
    <scope>INTERACTION WITH DHX30</scope>
</reference>
<reference key="13">
    <citation type="journal article" date="2011" name="Proc. Natl. Acad. Sci. U.S.A.">
        <title>Zinc-finger antiviral protein inhibits HIV-1 infection by selectively targeting multiply spliced viral mRNAs for degradation.</title>
        <authorList>
            <person name="Zhu Y."/>
            <person name="Chen G."/>
            <person name="Lv F."/>
            <person name="Wang X."/>
            <person name="Ji X."/>
            <person name="Xu Y."/>
            <person name="Sun J."/>
            <person name="Wu L."/>
            <person name="Zheng Y.T."/>
            <person name="Gao G."/>
        </authorList>
    </citation>
    <scope>FUNCTION</scope>
    <scope>INTERACTION WITH EXOSC5</scope>
</reference>
<reference key="14">
    <citation type="journal article" date="2012" name="J. Biol. Chem.">
        <title>Glycogen synthase kinase 3? (GSK3?) modulates antiviral activity of zinc-finger antiviral protein (ZAP).</title>
        <authorList>
            <person name="Sun L."/>
            <person name="Lv F."/>
            <person name="Guo X."/>
            <person name="Gao G."/>
        </authorList>
    </citation>
    <scope>PHOSPHORYLATION AT SER-257; SER-262; SER-266; SER-270 AND SER-274</scope>
</reference>
<reference key="15">
    <citation type="journal article" date="2012" name="Nat. Commun.">
        <title>Quantitative maps of protein phosphorylation sites across 14 different rat organs and tissues.</title>
        <authorList>
            <person name="Lundby A."/>
            <person name="Secher A."/>
            <person name="Lage K."/>
            <person name="Nordsborg N.B."/>
            <person name="Dmytriyev A."/>
            <person name="Lundby C."/>
            <person name="Olsen J.V."/>
        </authorList>
    </citation>
    <scope>PHOSPHORYLATION [LARGE SCALE ANALYSIS] AT SER-266; SER-270; SER-274 AND SER-325</scope>
    <scope>IDENTIFICATION BY MASS SPECTROMETRY [LARGE SCALE ANALYSIS]</scope>
</reference>
<reference key="16">
    <citation type="journal article" date="2012" name="Nat. Struct. Mol. Biol.">
        <title>Structure of N-terminal domain of ZAP indicates how a zinc-finger protein recognizes complex RNA.</title>
        <authorList>
            <person name="Chen S."/>
            <person name="Xu Y."/>
            <person name="Zhang K."/>
            <person name="Wang X."/>
            <person name="Sun J."/>
            <person name="Gao G."/>
            <person name="Liu Y."/>
        </authorList>
    </citation>
    <scope>X-RAY CRYSTALLOGRAPHY (1.8 ANGSTROMS) OF 1-225</scope>
    <scope>SUBUNIT</scope>
    <scope>RNA-BINDING</scope>
    <scope>DOMAIN N-TERMINAL</scope>
</reference>
<name>ZCCHV_RAT</name>
<dbReference type="EMBL" id="AF521008">
    <property type="protein sequence ID" value="AAM75358.1"/>
    <property type="molecule type" value="mRNA"/>
</dbReference>
<dbReference type="PDB" id="3U9G">
    <property type="method" value="X-ray"/>
    <property type="resolution" value="1.80 A"/>
    <property type="chains" value="A=1-225"/>
</dbReference>
<dbReference type="PDBsum" id="3U9G"/>
<dbReference type="SMR" id="Q8K3Y6"/>
<dbReference type="DIP" id="DIP-29842N"/>
<dbReference type="FunCoup" id="Q8K3Y6">
    <property type="interactions" value="498"/>
</dbReference>
<dbReference type="IntAct" id="Q8K3Y6">
    <property type="interactions" value="7"/>
</dbReference>
<dbReference type="STRING" id="10116.ENSRNOP00000018782"/>
<dbReference type="iPTMnet" id="Q8K3Y6"/>
<dbReference type="PhosphoSitePlus" id="Q8K3Y6"/>
<dbReference type="jPOST" id="Q8K3Y6"/>
<dbReference type="PaxDb" id="10116-ENSRNOP00000018782"/>
<dbReference type="UCSC" id="RGD:628694">
    <property type="organism name" value="rat"/>
</dbReference>
<dbReference type="AGR" id="RGD:628694"/>
<dbReference type="RGD" id="628694">
    <property type="gene designation" value="Zc3hav1"/>
</dbReference>
<dbReference type="eggNOG" id="ENOG502QSC4">
    <property type="taxonomic scope" value="Eukaryota"/>
</dbReference>
<dbReference type="InParanoid" id="Q8K3Y6"/>
<dbReference type="PhylomeDB" id="Q8K3Y6"/>
<dbReference type="EvolutionaryTrace" id="Q8K3Y6"/>
<dbReference type="PRO" id="PR:Q8K3Y6"/>
<dbReference type="Proteomes" id="UP000002494">
    <property type="component" value="Unplaced"/>
</dbReference>
<dbReference type="GO" id="GO:0005737">
    <property type="term" value="C:cytoplasm"/>
    <property type="evidence" value="ECO:0007669"/>
    <property type="project" value="UniProtKB-SubCell"/>
</dbReference>
<dbReference type="GO" id="GO:0005634">
    <property type="term" value="C:nucleus"/>
    <property type="evidence" value="ECO:0007669"/>
    <property type="project" value="UniProtKB-SubCell"/>
</dbReference>
<dbReference type="GO" id="GO:0042802">
    <property type="term" value="F:identical protein binding"/>
    <property type="evidence" value="ECO:0000353"/>
    <property type="project" value="IntAct"/>
</dbReference>
<dbReference type="GO" id="GO:0003723">
    <property type="term" value="F:RNA binding"/>
    <property type="evidence" value="ECO:0000314"/>
    <property type="project" value="RGD"/>
</dbReference>
<dbReference type="GO" id="GO:0008270">
    <property type="term" value="F:zinc ion binding"/>
    <property type="evidence" value="ECO:0007669"/>
    <property type="project" value="UniProtKB-KW"/>
</dbReference>
<dbReference type="GO" id="GO:0071360">
    <property type="term" value="P:cellular response to exogenous dsRNA"/>
    <property type="evidence" value="ECO:0000266"/>
    <property type="project" value="RGD"/>
</dbReference>
<dbReference type="GO" id="GO:0098586">
    <property type="term" value="P:cellular response to virus"/>
    <property type="evidence" value="ECO:0000315"/>
    <property type="project" value="RGD"/>
</dbReference>
<dbReference type="GO" id="GO:0051607">
    <property type="term" value="P:defense response to virus"/>
    <property type="evidence" value="ECO:0007669"/>
    <property type="project" value="UniProtKB-KW"/>
</dbReference>
<dbReference type="GO" id="GO:0045087">
    <property type="term" value="P:innate immune response"/>
    <property type="evidence" value="ECO:0007669"/>
    <property type="project" value="UniProtKB-KW"/>
</dbReference>
<dbReference type="GO" id="GO:0045071">
    <property type="term" value="P:negative regulation of viral genome replication"/>
    <property type="evidence" value="ECO:0000314"/>
    <property type="project" value="UniProtKB"/>
</dbReference>
<dbReference type="GO" id="GO:0061014">
    <property type="term" value="P:positive regulation of mRNA catabolic process"/>
    <property type="evidence" value="ECO:0000314"/>
    <property type="project" value="UniProtKB"/>
</dbReference>
<dbReference type="GO" id="GO:0032481">
    <property type="term" value="P:positive regulation of type I interferon production"/>
    <property type="evidence" value="ECO:0000266"/>
    <property type="project" value="RGD"/>
</dbReference>
<dbReference type="GO" id="GO:0050691">
    <property type="term" value="P:regulation of defense response to virus by host"/>
    <property type="evidence" value="ECO:0000314"/>
    <property type="project" value="RGD"/>
</dbReference>
<dbReference type="GO" id="GO:0009615">
    <property type="term" value="P:response to virus"/>
    <property type="evidence" value="ECO:0000314"/>
    <property type="project" value="UniProtKB"/>
</dbReference>
<dbReference type="FunFam" id="1.10.10.10:FF:000428">
    <property type="entry name" value="Zinc finger CCCH-type containing, antiviral 1"/>
    <property type="match status" value="1"/>
</dbReference>
<dbReference type="Gene3D" id="3.30.720.50">
    <property type="match status" value="1"/>
</dbReference>
<dbReference type="Gene3D" id="1.10.10.10">
    <property type="entry name" value="Winged helix-like DNA-binding domain superfamily/Winged helix DNA-binding domain"/>
    <property type="match status" value="1"/>
</dbReference>
<dbReference type="InterPro" id="IPR051712">
    <property type="entry name" value="ARTD-AVP"/>
</dbReference>
<dbReference type="InterPro" id="IPR036388">
    <property type="entry name" value="WH-like_DNA-bd_sf"/>
</dbReference>
<dbReference type="InterPro" id="IPR004170">
    <property type="entry name" value="WWE_dom"/>
</dbReference>
<dbReference type="InterPro" id="IPR037197">
    <property type="entry name" value="WWE_dom_sf"/>
</dbReference>
<dbReference type="InterPro" id="IPR041360">
    <property type="entry name" value="ZAP_HTH"/>
</dbReference>
<dbReference type="InterPro" id="IPR040954">
    <property type="entry name" value="Znf-CCCH_8"/>
</dbReference>
<dbReference type="InterPro" id="IPR000571">
    <property type="entry name" value="Znf_CCCH"/>
</dbReference>
<dbReference type="PANTHER" id="PTHR45740">
    <property type="entry name" value="POLY [ADP-RIBOSE] POLYMERASE"/>
    <property type="match status" value="1"/>
</dbReference>
<dbReference type="PANTHER" id="PTHR45740:SF8">
    <property type="entry name" value="ZINC FINGER CCCH-TYPE ANTIVIRAL PROTEIN 1"/>
    <property type="match status" value="1"/>
</dbReference>
<dbReference type="Pfam" id="PF18606">
    <property type="entry name" value="HTH_53"/>
    <property type="match status" value="1"/>
</dbReference>
<dbReference type="Pfam" id="PF02825">
    <property type="entry name" value="WWE"/>
    <property type="match status" value="1"/>
</dbReference>
<dbReference type="Pfam" id="PF23466">
    <property type="entry name" value="WWE_4"/>
    <property type="match status" value="1"/>
</dbReference>
<dbReference type="Pfam" id="PF18633">
    <property type="entry name" value="zf-CCCH_8"/>
    <property type="match status" value="1"/>
</dbReference>
<dbReference type="Pfam" id="PF25261">
    <property type="entry name" value="zf-CCCH_PARP12"/>
    <property type="match status" value="1"/>
</dbReference>
<dbReference type="SUPFAM" id="SSF117839">
    <property type="entry name" value="WWE domain"/>
    <property type="match status" value="1"/>
</dbReference>
<dbReference type="PROSITE" id="PS50918">
    <property type="entry name" value="WWE"/>
    <property type="match status" value="1"/>
</dbReference>
<dbReference type="PROSITE" id="PS50103">
    <property type="entry name" value="ZF_C3H1"/>
    <property type="match status" value="2"/>
</dbReference>
<sequence>MADPGVCCFITKILCAHGGRMTLEELLGEIRLPEAQLYELLETAGPDRFVLLETGGQAGITRSVVATTRARVCRRKYCQRPCDSLHLCKLNLLGRCHYAQSQRNLCKYSHDVLSEQNFQILKNHELSGLNQEELACLLVQSDPFFLPEICKSYKGEGRKQTCGQPQPCERLHICEHFTRGNCSYLNCLRSHNLMDRKVLTIMREHGLSPDVVQNIQDICNNKHARRNPPGTRAAHPHRRGGAHRDRSKSRDRFLHNSLEFLSPVVSPLGSGPPSPDVTSCKDSLEDVSVDVTQKFKYLGTHDRAQLSPVSSKAAGVQGPSQMRASQEFSEDGNLDDIFSRNRSDSSSSRASAAKVAQRNEAVAMKMGMEVKGKKEAPDIDRVPFLNSYIDGVTMEKASVSGIPGKKFTANDLENLLLLNDTWKNVAKPQDLQTTGRITDSGQDKAFLQNKYGGNPVWASASTHNAPNGSSQIMDETPNVSKSSTSGFAIKPAIAGGKEAVYSGVQSPRSQVLAVPGEATTPVQSNRLPQSPLSSSSHRAAASGSPGKNSTHTSVSPAIESSRMTSDPDEYLLRYILNPLFRMDNHGPKEICQDHLYKGCQQSHCDRSHFHLPYRWQMFVYTTWRDFQDMESIEQAYCDPHVELILIENHQINFQKMTCDSYPIRRLSTPSYEEKPLSAVFATKWIWYWKNEFNEYIQYGNESPGHTSSDINSAYLESFFQSCPRGVLPFQAGSQKYELSFQGMIQTNIASKTQRHVVRRPVFVSSNDVEQKRRGPE</sequence>
<protein>
    <recommendedName>
        <fullName>Zinc finger CCCH-type antiviral protein 1</fullName>
    </recommendedName>
    <alternativeName>
        <fullName>ADP-ribosyltransferase diphtheria toxin-like 13</fullName>
        <shortName>ARTD13</shortName>
    </alternativeName>
    <alternativeName>
        <fullName evidence="21">Inactive Poly [ADP-ribose] polymerase 13</fullName>
        <shortName>PARP13</shortName>
    </alternativeName>
    <alternativeName>
        <fullName>Zinc finger antiviral protein</fullName>
        <shortName>ZAP</shortName>
        <shortName>rZAP</shortName>
    </alternativeName>
</protein>